<comment type="function">
    <text evidence="1">Produces ATP from ADP in the presence of a proton gradient across the membrane. The gamma chain is believed to be important in regulating ATPase activity and the flow of protons through the CF(0) complex.</text>
</comment>
<comment type="subunit">
    <text evidence="1">F-type ATPases have 2 components, CF(1) - the catalytic core - and CF(0) - the membrane proton channel. CF(1) has five subunits: alpha(3), beta(3), gamma(1), delta(1), epsilon(1). CF(0) has three main subunits: a, b and c.</text>
</comment>
<comment type="subcellular location">
    <subcellularLocation>
        <location evidence="1">Cell inner membrane</location>
        <topology evidence="1">Peripheral membrane protein</topology>
    </subcellularLocation>
</comment>
<comment type="similarity">
    <text evidence="1">Belongs to the ATPase gamma chain family.</text>
</comment>
<dbReference type="EMBL" id="CP000627">
    <property type="protein sequence ID" value="ABQ19871.1"/>
    <property type="molecule type" value="Genomic_DNA"/>
</dbReference>
<dbReference type="EMBL" id="CP001235">
    <property type="protein sequence ID" value="ACP08217.1"/>
    <property type="molecule type" value="Genomic_DNA"/>
</dbReference>
<dbReference type="RefSeq" id="WP_000896515.1">
    <property type="nucleotide sequence ID" value="NZ_JAACZH010000018.1"/>
</dbReference>
<dbReference type="SMR" id="A5F458"/>
<dbReference type="GeneID" id="69721149"/>
<dbReference type="KEGG" id="vco:VC0395_A2527"/>
<dbReference type="KEGG" id="vcr:VC395_0190"/>
<dbReference type="PATRIC" id="fig|345073.21.peg.179"/>
<dbReference type="eggNOG" id="COG0224">
    <property type="taxonomic scope" value="Bacteria"/>
</dbReference>
<dbReference type="HOGENOM" id="CLU_050669_0_1_6"/>
<dbReference type="OrthoDB" id="9812769at2"/>
<dbReference type="Proteomes" id="UP000000249">
    <property type="component" value="Chromosome 2"/>
</dbReference>
<dbReference type="GO" id="GO:0005886">
    <property type="term" value="C:plasma membrane"/>
    <property type="evidence" value="ECO:0007669"/>
    <property type="project" value="UniProtKB-SubCell"/>
</dbReference>
<dbReference type="GO" id="GO:0045259">
    <property type="term" value="C:proton-transporting ATP synthase complex"/>
    <property type="evidence" value="ECO:0007669"/>
    <property type="project" value="UniProtKB-KW"/>
</dbReference>
<dbReference type="GO" id="GO:0005524">
    <property type="term" value="F:ATP binding"/>
    <property type="evidence" value="ECO:0007669"/>
    <property type="project" value="UniProtKB-UniRule"/>
</dbReference>
<dbReference type="GO" id="GO:0046933">
    <property type="term" value="F:proton-transporting ATP synthase activity, rotational mechanism"/>
    <property type="evidence" value="ECO:0007669"/>
    <property type="project" value="UniProtKB-UniRule"/>
</dbReference>
<dbReference type="GO" id="GO:0042777">
    <property type="term" value="P:proton motive force-driven plasma membrane ATP synthesis"/>
    <property type="evidence" value="ECO:0007669"/>
    <property type="project" value="UniProtKB-UniRule"/>
</dbReference>
<dbReference type="CDD" id="cd12151">
    <property type="entry name" value="F1-ATPase_gamma"/>
    <property type="match status" value="1"/>
</dbReference>
<dbReference type="FunFam" id="1.10.287.80:FF:000005">
    <property type="entry name" value="ATP synthase gamma chain"/>
    <property type="match status" value="1"/>
</dbReference>
<dbReference type="FunFam" id="1.10.287.80:FF:000015">
    <property type="entry name" value="ATP synthase gamma chain"/>
    <property type="match status" value="1"/>
</dbReference>
<dbReference type="FunFam" id="3.40.1380.10:FF:000001">
    <property type="entry name" value="ATP synthase gamma chain"/>
    <property type="match status" value="1"/>
</dbReference>
<dbReference type="Gene3D" id="3.40.1380.10">
    <property type="match status" value="1"/>
</dbReference>
<dbReference type="Gene3D" id="1.10.287.80">
    <property type="entry name" value="ATP synthase, gamma subunit, helix hairpin domain"/>
    <property type="match status" value="2"/>
</dbReference>
<dbReference type="HAMAP" id="MF_00815">
    <property type="entry name" value="ATP_synth_gamma_bact"/>
    <property type="match status" value="1"/>
</dbReference>
<dbReference type="InterPro" id="IPR035968">
    <property type="entry name" value="ATP_synth_F1_ATPase_gsu"/>
</dbReference>
<dbReference type="InterPro" id="IPR000131">
    <property type="entry name" value="ATP_synth_F1_gsu"/>
</dbReference>
<dbReference type="InterPro" id="IPR023632">
    <property type="entry name" value="ATP_synth_F1_gsu_CS"/>
</dbReference>
<dbReference type="NCBIfam" id="TIGR01146">
    <property type="entry name" value="ATPsyn_F1gamma"/>
    <property type="match status" value="1"/>
</dbReference>
<dbReference type="NCBIfam" id="NF004144">
    <property type="entry name" value="PRK05621.1-1"/>
    <property type="match status" value="1"/>
</dbReference>
<dbReference type="PANTHER" id="PTHR11693">
    <property type="entry name" value="ATP SYNTHASE GAMMA CHAIN"/>
    <property type="match status" value="1"/>
</dbReference>
<dbReference type="PANTHER" id="PTHR11693:SF22">
    <property type="entry name" value="ATP SYNTHASE SUBUNIT GAMMA, MITOCHONDRIAL"/>
    <property type="match status" value="1"/>
</dbReference>
<dbReference type="Pfam" id="PF00231">
    <property type="entry name" value="ATP-synt"/>
    <property type="match status" value="1"/>
</dbReference>
<dbReference type="PRINTS" id="PR00126">
    <property type="entry name" value="ATPASEGAMMA"/>
</dbReference>
<dbReference type="SUPFAM" id="SSF52943">
    <property type="entry name" value="ATP synthase (F1-ATPase), gamma subunit"/>
    <property type="match status" value="1"/>
</dbReference>
<dbReference type="PROSITE" id="PS00153">
    <property type="entry name" value="ATPASE_GAMMA"/>
    <property type="match status" value="1"/>
</dbReference>
<gene>
    <name evidence="1" type="primary">atpG</name>
    <name type="ordered locus">VC0395_A2527</name>
    <name type="ordered locus">VC395_0190</name>
</gene>
<name>ATPG_VIBC3</name>
<keyword id="KW-0066">ATP synthesis</keyword>
<keyword id="KW-0997">Cell inner membrane</keyword>
<keyword id="KW-1003">Cell membrane</keyword>
<keyword id="KW-0139">CF(1)</keyword>
<keyword id="KW-0375">Hydrogen ion transport</keyword>
<keyword id="KW-0406">Ion transport</keyword>
<keyword id="KW-0472">Membrane</keyword>
<keyword id="KW-0813">Transport</keyword>
<proteinExistence type="inferred from homology"/>
<protein>
    <recommendedName>
        <fullName evidence="1">ATP synthase gamma chain</fullName>
    </recommendedName>
    <alternativeName>
        <fullName evidence="1">ATP synthase F1 sector gamma subunit</fullName>
    </alternativeName>
    <alternativeName>
        <fullName evidence="1">F-ATPase gamma subunit</fullName>
    </alternativeName>
</protein>
<organism>
    <name type="scientific">Vibrio cholerae serotype O1 (strain ATCC 39541 / Classical Ogawa 395 / O395)</name>
    <dbReference type="NCBI Taxonomy" id="345073"/>
    <lineage>
        <taxon>Bacteria</taxon>
        <taxon>Pseudomonadati</taxon>
        <taxon>Pseudomonadota</taxon>
        <taxon>Gammaproteobacteria</taxon>
        <taxon>Vibrionales</taxon>
        <taxon>Vibrionaceae</taxon>
        <taxon>Vibrio</taxon>
    </lineage>
</organism>
<feature type="chain" id="PRO_1000072865" description="ATP synthase gamma chain">
    <location>
        <begin position="1"/>
        <end position="288"/>
    </location>
</feature>
<accession>A5F458</accession>
<accession>C3M338</accession>
<reference key="1">
    <citation type="submission" date="2007-03" db="EMBL/GenBank/DDBJ databases">
        <authorList>
            <person name="Heidelberg J."/>
        </authorList>
    </citation>
    <scope>NUCLEOTIDE SEQUENCE [LARGE SCALE GENOMIC DNA]</scope>
    <source>
        <strain>ATCC 39541 / Classical Ogawa 395 / O395</strain>
    </source>
</reference>
<reference key="2">
    <citation type="journal article" date="2008" name="PLoS ONE">
        <title>A recalibrated molecular clock and independent origins for the cholera pandemic clones.</title>
        <authorList>
            <person name="Feng L."/>
            <person name="Reeves P.R."/>
            <person name="Lan R."/>
            <person name="Ren Y."/>
            <person name="Gao C."/>
            <person name="Zhou Z."/>
            <person name="Ren Y."/>
            <person name="Cheng J."/>
            <person name="Wang W."/>
            <person name="Wang J."/>
            <person name="Qian W."/>
            <person name="Li D."/>
            <person name="Wang L."/>
        </authorList>
    </citation>
    <scope>NUCLEOTIDE SEQUENCE [LARGE SCALE GENOMIC DNA]</scope>
    <source>
        <strain>ATCC 39541 / Classical Ogawa 395 / O395</strain>
    </source>
</reference>
<sequence>MAGAKEIRTKIGSVKSTQKITKAMEMVAASKMRRSQDAMESSRPYAQTIRKVIGHVANASLEYRHPYLEEREAKRVGYIIISTDRGLCGGLNINLFKKAITDMQTWKEKGAQIELAIIGSKATAFFNNSGAKVAAQVSGLGDSPSLEDLIGSVGVMLKKYDKGELDRLYLVFNQFVNTMVQKPKIDQLLPLPKSDSEDMQRDHMWDYIYEPEPKPLLDALLLRFIESQVYQGVVENLACEQAARMVAMKAATDNASNLIDDLQLVYNKARQAAITQELSEIVGGAAAV</sequence>
<evidence type="ECO:0000255" key="1">
    <source>
        <dbReference type="HAMAP-Rule" id="MF_00815"/>
    </source>
</evidence>